<dbReference type="EC" id="2.4.2.9" evidence="1"/>
<dbReference type="EMBL" id="CP001056">
    <property type="protein sequence ID" value="ACD24972.1"/>
    <property type="molecule type" value="Genomic_DNA"/>
</dbReference>
<dbReference type="SMR" id="B2TS13"/>
<dbReference type="KEGG" id="cbk:CLL_A2431"/>
<dbReference type="PATRIC" id="fig|935198.13.peg.2391"/>
<dbReference type="HOGENOM" id="CLU_094234_2_1_9"/>
<dbReference type="Proteomes" id="UP000001195">
    <property type="component" value="Chromosome"/>
</dbReference>
<dbReference type="GO" id="GO:0003723">
    <property type="term" value="F:RNA binding"/>
    <property type="evidence" value="ECO:0007669"/>
    <property type="project" value="UniProtKB-UniRule"/>
</dbReference>
<dbReference type="GO" id="GO:0004845">
    <property type="term" value="F:uracil phosphoribosyltransferase activity"/>
    <property type="evidence" value="ECO:0007669"/>
    <property type="project" value="UniProtKB-UniRule"/>
</dbReference>
<dbReference type="GO" id="GO:0006353">
    <property type="term" value="P:DNA-templated transcription termination"/>
    <property type="evidence" value="ECO:0007669"/>
    <property type="project" value="UniProtKB-UniRule"/>
</dbReference>
<dbReference type="CDD" id="cd06223">
    <property type="entry name" value="PRTases_typeI"/>
    <property type="match status" value="1"/>
</dbReference>
<dbReference type="FunFam" id="3.40.50.2020:FF:000020">
    <property type="entry name" value="Bifunctional protein PyrR"/>
    <property type="match status" value="1"/>
</dbReference>
<dbReference type="Gene3D" id="3.40.50.2020">
    <property type="match status" value="1"/>
</dbReference>
<dbReference type="HAMAP" id="MF_01219">
    <property type="entry name" value="PyrR"/>
    <property type="match status" value="1"/>
</dbReference>
<dbReference type="InterPro" id="IPR000836">
    <property type="entry name" value="PRibTrfase_dom"/>
</dbReference>
<dbReference type="InterPro" id="IPR029057">
    <property type="entry name" value="PRTase-like"/>
</dbReference>
<dbReference type="InterPro" id="IPR023050">
    <property type="entry name" value="PyrR"/>
</dbReference>
<dbReference type="InterPro" id="IPR050137">
    <property type="entry name" value="PyrR_bifunctional"/>
</dbReference>
<dbReference type="NCBIfam" id="NF003548">
    <property type="entry name" value="PRK05205.1-4"/>
    <property type="match status" value="1"/>
</dbReference>
<dbReference type="NCBIfam" id="NF003549">
    <property type="entry name" value="PRK05205.1-5"/>
    <property type="match status" value="1"/>
</dbReference>
<dbReference type="PANTHER" id="PTHR11608">
    <property type="entry name" value="BIFUNCTIONAL PROTEIN PYRR"/>
    <property type="match status" value="1"/>
</dbReference>
<dbReference type="PANTHER" id="PTHR11608:SF0">
    <property type="entry name" value="BIFUNCTIONAL PROTEIN PYRR"/>
    <property type="match status" value="1"/>
</dbReference>
<dbReference type="Pfam" id="PF00156">
    <property type="entry name" value="Pribosyltran"/>
    <property type="match status" value="1"/>
</dbReference>
<dbReference type="SUPFAM" id="SSF53271">
    <property type="entry name" value="PRTase-like"/>
    <property type="match status" value="1"/>
</dbReference>
<sequence length="180" mass="20351">MELKSTLLDDKAIKRTLIRISHEIIERNKGIEDIVLIGIKRRGYPLAQRIAEHIEGIEGSKVDVGYVDITLYRDDLTIVEKDPTVKSIDIETTIKDKKVILVDDVLYTCRTVRAAIDAVMDLDRPEGIQLAVLIDRGHKELPIRADYVGKNIPTSKNEVIKVMLNEIDGEDSVKIYDSIN</sequence>
<gene>
    <name evidence="1" type="primary">pyrR</name>
    <name type="ordered locus">CLL_A2431</name>
</gene>
<proteinExistence type="inferred from homology"/>
<keyword id="KW-0328">Glycosyltransferase</keyword>
<keyword id="KW-0694">RNA-binding</keyword>
<keyword id="KW-0804">Transcription</keyword>
<keyword id="KW-0805">Transcription regulation</keyword>
<keyword id="KW-0806">Transcription termination</keyword>
<keyword id="KW-0808">Transferase</keyword>
<reference key="1">
    <citation type="submission" date="2008-04" db="EMBL/GenBank/DDBJ databases">
        <title>Complete sequence of Clostridium botulinum strain Eklund.</title>
        <authorList>
            <person name="Brinkac L.M."/>
            <person name="Brown J.L."/>
            <person name="Bruce D."/>
            <person name="Detter C."/>
            <person name="Munk C."/>
            <person name="Smith L.A."/>
            <person name="Smith T.J."/>
            <person name="Sutton G."/>
            <person name="Brettin T.S."/>
        </authorList>
    </citation>
    <scope>NUCLEOTIDE SEQUENCE [LARGE SCALE GENOMIC DNA]</scope>
    <source>
        <strain>Eklund 17B / Type B</strain>
    </source>
</reference>
<comment type="function">
    <text evidence="1">Regulates transcriptional attenuation of the pyrimidine nucleotide (pyr) operon by binding in a uridine-dependent manner to specific sites on pyr mRNA. This disrupts an antiterminator hairpin in the RNA and favors formation of a downstream transcription terminator, leading to a reduced expression of downstream genes.</text>
</comment>
<comment type="function">
    <text evidence="1">Also displays a weak uracil phosphoribosyltransferase activity which is not physiologically significant.</text>
</comment>
<comment type="catalytic activity">
    <reaction evidence="1">
        <text>UMP + diphosphate = 5-phospho-alpha-D-ribose 1-diphosphate + uracil</text>
        <dbReference type="Rhea" id="RHEA:13017"/>
        <dbReference type="ChEBI" id="CHEBI:17568"/>
        <dbReference type="ChEBI" id="CHEBI:33019"/>
        <dbReference type="ChEBI" id="CHEBI:57865"/>
        <dbReference type="ChEBI" id="CHEBI:58017"/>
        <dbReference type="EC" id="2.4.2.9"/>
    </reaction>
</comment>
<comment type="subunit">
    <text evidence="1">Homodimer and homohexamer; in equilibrium.</text>
</comment>
<comment type="similarity">
    <text evidence="1">Belongs to the purine/pyrimidine phosphoribosyltransferase family. PyrR subfamily.</text>
</comment>
<organism>
    <name type="scientific">Clostridium botulinum (strain Eklund 17B / Type B)</name>
    <dbReference type="NCBI Taxonomy" id="935198"/>
    <lineage>
        <taxon>Bacteria</taxon>
        <taxon>Bacillati</taxon>
        <taxon>Bacillota</taxon>
        <taxon>Clostridia</taxon>
        <taxon>Eubacteriales</taxon>
        <taxon>Clostridiaceae</taxon>
        <taxon>Clostridium</taxon>
    </lineage>
</organism>
<name>PYRR_CLOBB</name>
<protein>
    <recommendedName>
        <fullName evidence="1">Bifunctional protein PyrR</fullName>
    </recommendedName>
    <domain>
        <recommendedName>
            <fullName evidence="1">Pyrimidine operon regulatory protein</fullName>
        </recommendedName>
    </domain>
    <domain>
        <recommendedName>
            <fullName evidence="1">Uracil phosphoribosyltransferase</fullName>
            <shortName evidence="1">UPRTase</shortName>
            <ecNumber evidence="1">2.4.2.9</ecNumber>
        </recommendedName>
    </domain>
</protein>
<evidence type="ECO:0000255" key="1">
    <source>
        <dbReference type="HAMAP-Rule" id="MF_01219"/>
    </source>
</evidence>
<accession>B2TS13</accession>
<feature type="chain" id="PRO_1000139190" description="Bifunctional protein PyrR">
    <location>
        <begin position="1"/>
        <end position="180"/>
    </location>
</feature>
<feature type="short sequence motif" description="PRPP-binding" evidence="1">
    <location>
        <begin position="99"/>
        <end position="111"/>
    </location>
</feature>